<dbReference type="EC" id="4.1.1.23" evidence="1"/>
<dbReference type="EMBL" id="CP001091">
    <property type="protein sequence ID" value="ACE61431.1"/>
    <property type="molecule type" value="Genomic_DNA"/>
</dbReference>
<dbReference type="RefSeq" id="WP_005597131.1">
    <property type="nucleotide sequence ID" value="NC_010939.1"/>
</dbReference>
<dbReference type="SMR" id="B3GXH2"/>
<dbReference type="GeneID" id="48598917"/>
<dbReference type="KEGG" id="apa:APP7_0779"/>
<dbReference type="HOGENOM" id="CLU_067069_0_0_6"/>
<dbReference type="UniPathway" id="UPA00070">
    <property type="reaction ID" value="UER00120"/>
</dbReference>
<dbReference type="Proteomes" id="UP000001226">
    <property type="component" value="Chromosome"/>
</dbReference>
<dbReference type="GO" id="GO:0005829">
    <property type="term" value="C:cytosol"/>
    <property type="evidence" value="ECO:0007669"/>
    <property type="project" value="TreeGrafter"/>
</dbReference>
<dbReference type="GO" id="GO:0004590">
    <property type="term" value="F:orotidine-5'-phosphate decarboxylase activity"/>
    <property type="evidence" value="ECO:0007669"/>
    <property type="project" value="UniProtKB-UniRule"/>
</dbReference>
<dbReference type="GO" id="GO:0006207">
    <property type="term" value="P:'de novo' pyrimidine nucleobase biosynthetic process"/>
    <property type="evidence" value="ECO:0007669"/>
    <property type="project" value="InterPro"/>
</dbReference>
<dbReference type="GO" id="GO:0044205">
    <property type="term" value="P:'de novo' UMP biosynthetic process"/>
    <property type="evidence" value="ECO:0007669"/>
    <property type="project" value="UniProtKB-UniRule"/>
</dbReference>
<dbReference type="CDD" id="cd04725">
    <property type="entry name" value="OMP_decarboxylase_like"/>
    <property type="match status" value="1"/>
</dbReference>
<dbReference type="FunFam" id="3.20.20.70:FF:000015">
    <property type="entry name" value="Orotidine 5'-phosphate decarboxylase"/>
    <property type="match status" value="1"/>
</dbReference>
<dbReference type="Gene3D" id="3.20.20.70">
    <property type="entry name" value="Aldolase class I"/>
    <property type="match status" value="1"/>
</dbReference>
<dbReference type="HAMAP" id="MF_01200_B">
    <property type="entry name" value="OMPdecase_type1_B"/>
    <property type="match status" value="1"/>
</dbReference>
<dbReference type="InterPro" id="IPR013785">
    <property type="entry name" value="Aldolase_TIM"/>
</dbReference>
<dbReference type="InterPro" id="IPR014732">
    <property type="entry name" value="OMPdecase"/>
</dbReference>
<dbReference type="InterPro" id="IPR018089">
    <property type="entry name" value="OMPdecase_AS"/>
</dbReference>
<dbReference type="InterPro" id="IPR047596">
    <property type="entry name" value="OMPdecase_bac"/>
</dbReference>
<dbReference type="InterPro" id="IPR001754">
    <property type="entry name" value="OMPdeCOase_dom"/>
</dbReference>
<dbReference type="InterPro" id="IPR011060">
    <property type="entry name" value="RibuloseP-bd_barrel"/>
</dbReference>
<dbReference type="NCBIfam" id="NF001273">
    <property type="entry name" value="PRK00230.1"/>
    <property type="match status" value="1"/>
</dbReference>
<dbReference type="NCBIfam" id="TIGR01740">
    <property type="entry name" value="pyrF"/>
    <property type="match status" value="1"/>
</dbReference>
<dbReference type="PANTHER" id="PTHR32119">
    <property type="entry name" value="OROTIDINE 5'-PHOSPHATE DECARBOXYLASE"/>
    <property type="match status" value="1"/>
</dbReference>
<dbReference type="PANTHER" id="PTHR32119:SF2">
    <property type="entry name" value="OROTIDINE 5'-PHOSPHATE DECARBOXYLASE"/>
    <property type="match status" value="1"/>
</dbReference>
<dbReference type="Pfam" id="PF00215">
    <property type="entry name" value="OMPdecase"/>
    <property type="match status" value="1"/>
</dbReference>
<dbReference type="SMART" id="SM00934">
    <property type="entry name" value="OMPdecase"/>
    <property type="match status" value="1"/>
</dbReference>
<dbReference type="SUPFAM" id="SSF51366">
    <property type="entry name" value="Ribulose-phoshate binding barrel"/>
    <property type="match status" value="1"/>
</dbReference>
<dbReference type="PROSITE" id="PS00156">
    <property type="entry name" value="OMPDECASE"/>
    <property type="match status" value="1"/>
</dbReference>
<name>PYRF_ACTP7</name>
<keyword id="KW-0210">Decarboxylase</keyword>
<keyword id="KW-0456">Lyase</keyword>
<keyword id="KW-0665">Pyrimidine biosynthesis</keyword>
<evidence type="ECO:0000255" key="1">
    <source>
        <dbReference type="HAMAP-Rule" id="MF_01200"/>
    </source>
</evidence>
<organism>
    <name type="scientific">Actinobacillus pleuropneumoniae serotype 7 (strain AP76)</name>
    <dbReference type="NCBI Taxonomy" id="537457"/>
    <lineage>
        <taxon>Bacteria</taxon>
        <taxon>Pseudomonadati</taxon>
        <taxon>Pseudomonadota</taxon>
        <taxon>Gammaproteobacteria</taxon>
        <taxon>Pasteurellales</taxon>
        <taxon>Pasteurellaceae</taxon>
        <taxon>Actinobacillus</taxon>
    </lineage>
</organism>
<sequence>MDNKIIVALDYETEYEALSFVDQVDPSLCRVKVGKEMFTTLGTNFVKQLHERKFDVFLDLKYHDIPNTVARAVRSAADLGVWMVDLHASGGLTMMEEAKKILEPYGKDAPLLIAVTVLTSMEDLDLLQIGINASPMEQVIRLAHLAQRAGLDGVVCSPQEVEVLRTHCGKDFKLVTPGIRPEGSDVGDQRRIMTPKQAIETGSDYLVIGRPITQAQDPLSVLKSINASIR</sequence>
<feature type="chain" id="PRO_1000138506" description="Orotidine 5'-phosphate decarboxylase">
    <location>
        <begin position="1"/>
        <end position="230"/>
    </location>
</feature>
<feature type="active site" description="Proton donor" evidence="1">
    <location>
        <position position="61"/>
    </location>
</feature>
<feature type="binding site" evidence="1">
    <location>
        <position position="10"/>
    </location>
    <ligand>
        <name>substrate</name>
    </ligand>
</feature>
<feature type="binding site" evidence="1">
    <location>
        <position position="32"/>
    </location>
    <ligand>
        <name>substrate</name>
    </ligand>
</feature>
<feature type="binding site" evidence="1">
    <location>
        <begin position="59"/>
        <end position="68"/>
    </location>
    <ligand>
        <name>substrate</name>
    </ligand>
</feature>
<feature type="binding site" evidence="1">
    <location>
        <position position="119"/>
    </location>
    <ligand>
        <name>substrate</name>
    </ligand>
</feature>
<feature type="binding site" evidence="1">
    <location>
        <position position="180"/>
    </location>
    <ligand>
        <name>substrate</name>
    </ligand>
</feature>
<feature type="binding site" evidence="1">
    <location>
        <position position="189"/>
    </location>
    <ligand>
        <name>substrate</name>
    </ligand>
</feature>
<feature type="binding site" evidence="1">
    <location>
        <position position="209"/>
    </location>
    <ligand>
        <name>substrate</name>
    </ligand>
</feature>
<feature type="binding site" evidence="1">
    <location>
        <position position="210"/>
    </location>
    <ligand>
        <name>substrate</name>
    </ligand>
</feature>
<protein>
    <recommendedName>
        <fullName evidence="1">Orotidine 5'-phosphate decarboxylase</fullName>
        <ecNumber evidence="1">4.1.1.23</ecNumber>
    </recommendedName>
    <alternativeName>
        <fullName evidence="1">OMP decarboxylase</fullName>
        <shortName evidence="1">OMPDCase</shortName>
        <shortName evidence="1">OMPdecase</shortName>
    </alternativeName>
</protein>
<reference key="1">
    <citation type="submission" date="2008-06" db="EMBL/GenBank/DDBJ databases">
        <title>Genome and proteome analysis of A. pleuropneumoniae serotype 7.</title>
        <authorList>
            <person name="Linke B."/>
            <person name="Buettner F."/>
            <person name="Martinez-Arias R."/>
            <person name="Goesmann A."/>
            <person name="Baltes N."/>
            <person name="Tegetmeyer H."/>
            <person name="Singh M."/>
            <person name="Gerlach G.F."/>
        </authorList>
    </citation>
    <scope>NUCLEOTIDE SEQUENCE [LARGE SCALE GENOMIC DNA]</scope>
    <source>
        <strain>AP76</strain>
    </source>
</reference>
<gene>
    <name evidence="1" type="primary">pyrF</name>
    <name type="ordered locus">APP7_0779</name>
</gene>
<accession>B3GXH2</accession>
<comment type="function">
    <text evidence="1">Catalyzes the decarboxylation of orotidine 5'-monophosphate (OMP) to uridine 5'-monophosphate (UMP).</text>
</comment>
<comment type="catalytic activity">
    <reaction evidence="1">
        <text>orotidine 5'-phosphate + H(+) = UMP + CO2</text>
        <dbReference type="Rhea" id="RHEA:11596"/>
        <dbReference type="ChEBI" id="CHEBI:15378"/>
        <dbReference type="ChEBI" id="CHEBI:16526"/>
        <dbReference type="ChEBI" id="CHEBI:57538"/>
        <dbReference type="ChEBI" id="CHEBI:57865"/>
        <dbReference type="EC" id="4.1.1.23"/>
    </reaction>
</comment>
<comment type="pathway">
    <text evidence="1">Pyrimidine metabolism; UMP biosynthesis via de novo pathway; UMP from orotate: step 2/2.</text>
</comment>
<comment type="subunit">
    <text evidence="1">Homodimer.</text>
</comment>
<comment type="similarity">
    <text evidence="1">Belongs to the OMP decarboxylase family. Type 1 subfamily.</text>
</comment>
<proteinExistence type="inferred from homology"/>